<gene>
    <name evidence="1" type="primary">obg</name>
    <name type="ordered locus">OTT_0266</name>
</gene>
<feature type="chain" id="PRO_0000386106" description="GTPase Obg">
    <location>
        <begin position="1"/>
        <end position="329"/>
    </location>
</feature>
<feature type="domain" description="Obg" evidence="2">
    <location>
        <begin position="1"/>
        <end position="159"/>
    </location>
</feature>
<feature type="domain" description="OBG-type G" evidence="1">
    <location>
        <begin position="160"/>
        <end position="327"/>
    </location>
</feature>
<feature type="binding site" evidence="1">
    <location>
        <begin position="166"/>
        <end position="173"/>
    </location>
    <ligand>
        <name>GTP</name>
        <dbReference type="ChEBI" id="CHEBI:37565"/>
    </ligand>
</feature>
<feature type="binding site" evidence="1">
    <location>
        <position position="173"/>
    </location>
    <ligand>
        <name>Mg(2+)</name>
        <dbReference type="ChEBI" id="CHEBI:18420"/>
    </ligand>
</feature>
<feature type="binding site" evidence="1">
    <location>
        <begin position="191"/>
        <end position="195"/>
    </location>
    <ligand>
        <name>GTP</name>
        <dbReference type="ChEBI" id="CHEBI:37565"/>
    </ligand>
</feature>
<feature type="binding site" evidence="1">
    <location>
        <position position="193"/>
    </location>
    <ligand>
        <name>Mg(2+)</name>
        <dbReference type="ChEBI" id="CHEBI:18420"/>
    </ligand>
</feature>
<feature type="binding site" evidence="1">
    <location>
        <begin position="212"/>
        <end position="215"/>
    </location>
    <ligand>
        <name>GTP</name>
        <dbReference type="ChEBI" id="CHEBI:37565"/>
    </ligand>
</feature>
<feature type="binding site" evidence="1">
    <location>
        <begin position="279"/>
        <end position="282"/>
    </location>
    <ligand>
        <name>GTP</name>
        <dbReference type="ChEBI" id="CHEBI:37565"/>
    </ligand>
</feature>
<feature type="binding site" evidence="1">
    <location>
        <begin position="308"/>
        <end position="310"/>
    </location>
    <ligand>
        <name>GTP</name>
        <dbReference type="ChEBI" id="CHEBI:37565"/>
    </ligand>
</feature>
<proteinExistence type="inferred from homology"/>
<organism>
    <name type="scientific">Orientia tsutsugamushi (strain Ikeda)</name>
    <name type="common">Rickettsia tsutsugamushi</name>
    <dbReference type="NCBI Taxonomy" id="334380"/>
    <lineage>
        <taxon>Bacteria</taxon>
        <taxon>Pseudomonadati</taxon>
        <taxon>Pseudomonadota</taxon>
        <taxon>Alphaproteobacteria</taxon>
        <taxon>Rickettsiales</taxon>
        <taxon>Rickettsiaceae</taxon>
        <taxon>Rickettsieae</taxon>
        <taxon>Orientia</taxon>
    </lineage>
</organism>
<sequence length="329" mass="36054">MQFIDEAKIFIKGGNGGDGCVSFRREKFVPNGGPDGGNGGRGGDIIFIGDRHLNTLINFKFKQHFLAQNGRAGAGNNRTGKSGQNLVLKVPVGTQILSNNKEHVIFDLTKDGQEFIIIRGGKGGLGNTYFKSSINQKPRKNTVGEIGDSMWVWLHLKLLSDVGLVGLPNAGKSTFLSAITSAKPKIADYPFTTLTPNLGVVYINNNSFVVADIPGLIAGAHLGQGLGDKFLKHIERCRIIVHLLDITAENLLQNYYTIRDELSSYSLSLKDKTEILCFTKTDTQSNEVIMSKLLELQPVINRVIYPISSYTKYGIKKLLANILSELQKS</sequence>
<accession>B3CQ33</accession>
<dbReference type="EC" id="3.6.5.-" evidence="1"/>
<dbReference type="EMBL" id="AP008981">
    <property type="protein sequence ID" value="BAG39724.1"/>
    <property type="molecule type" value="Genomic_DNA"/>
</dbReference>
<dbReference type="SMR" id="B3CQ33"/>
<dbReference type="KEGG" id="ott:OTT_0266"/>
<dbReference type="HOGENOM" id="CLU_011747_2_3_5"/>
<dbReference type="OrthoDB" id="9807318at2"/>
<dbReference type="Proteomes" id="UP000001033">
    <property type="component" value="Chromosome"/>
</dbReference>
<dbReference type="GO" id="GO:0005737">
    <property type="term" value="C:cytoplasm"/>
    <property type="evidence" value="ECO:0007669"/>
    <property type="project" value="UniProtKB-SubCell"/>
</dbReference>
<dbReference type="GO" id="GO:0005525">
    <property type="term" value="F:GTP binding"/>
    <property type="evidence" value="ECO:0007669"/>
    <property type="project" value="UniProtKB-UniRule"/>
</dbReference>
<dbReference type="GO" id="GO:0003924">
    <property type="term" value="F:GTPase activity"/>
    <property type="evidence" value="ECO:0007669"/>
    <property type="project" value="UniProtKB-UniRule"/>
</dbReference>
<dbReference type="GO" id="GO:0000287">
    <property type="term" value="F:magnesium ion binding"/>
    <property type="evidence" value="ECO:0007669"/>
    <property type="project" value="InterPro"/>
</dbReference>
<dbReference type="GO" id="GO:0042254">
    <property type="term" value="P:ribosome biogenesis"/>
    <property type="evidence" value="ECO:0007669"/>
    <property type="project" value="UniProtKB-UniRule"/>
</dbReference>
<dbReference type="CDD" id="cd01898">
    <property type="entry name" value="Obg"/>
    <property type="match status" value="1"/>
</dbReference>
<dbReference type="FunFam" id="2.70.210.12:FF:000001">
    <property type="entry name" value="GTPase Obg"/>
    <property type="match status" value="1"/>
</dbReference>
<dbReference type="Gene3D" id="2.70.210.12">
    <property type="entry name" value="GTP1/OBG domain"/>
    <property type="match status" value="1"/>
</dbReference>
<dbReference type="Gene3D" id="3.40.50.300">
    <property type="entry name" value="P-loop containing nucleotide triphosphate hydrolases"/>
    <property type="match status" value="1"/>
</dbReference>
<dbReference type="HAMAP" id="MF_01454">
    <property type="entry name" value="GTPase_Obg"/>
    <property type="match status" value="1"/>
</dbReference>
<dbReference type="InterPro" id="IPR031167">
    <property type="entry name" value="G_OBG"/>
</dbReference>
<dbReference type="InterPro" id="IPR006073">
    <property type="entry name" value="GTP-bd"/>
</dbReference>
<dbReference type="InterPro" id="IPR014100">
    <property type="entry name" value="GTP-bd_Obg/CgtA"/>
</dbReference>
<dbReference type="InterPro" id="IPR006169">
    <property type="entry name" value="GTP1_OBG_dom"/>
</dbReference>
<dbReference type="InterPro" id="IPR036726">
    <property type="entry name" value="GTP1_OBG_dom_sf"/>
</dbReference>
<dbReference type="InterPro" id="IPR045086">
    <property type="entry name" value="OBG_GTPase"/>
</dbReference>
<dbReference type="InterPro" id="IPR027417">
    <property type="entry name" value="P-loop_NTPase"/>
</dbReference>
<dbReference type="NCBIfam" id="TIGR02729">
    <property type="entry name" value="Obg_CgtA"/>
    <property type="match status" value="1"/>
</dbReference>
<dbReference type="NCBIfam" id="NF008955">
    <property type="entry name" value="PRK12297.1"/>
    <property type="match status" value="1"/>
</dbReference>
<dbReference type="NCBIfam" id="NF008956">
    <property type="entry name" value="PRK12299.1"/>
    <property type="match status" value="1"/>
</dbReference>
<dbReference type="PANTHER" id="PTHR11702">
    <property type="entry name" value="DEVELOPMENTALLY REGULATED GTP-BINDING PROTEIN-RELATED"/>
    <property type="match status" value="1"/>
</dbReference>
<dbReference type="PANTHER" id="PTHR11702:SF31">
    <property type="entry name" value="MITOCHONDRIAL RIBOSOME-ASSOCIATED GTPASE 2"/>
    <property type="match status" value="1"/>
</dbReference>
<dbReference type="Pfam" id="PF01018">
    <property type="entry name" value="GTP1_OBG"/>
    <property type="match status" value="1"/>
</dbReference>
<dbReference type="Pfam" id="PF01926">
    <property type="entry name" value="MMR_HSR1"/>
    <property type="match status" value="1"/>
</dbReference>
<dbReference type="PIRSF" id="PIRSF002401">
    <property type="entry name" value="GTP_bd_Obg/CgtA"/>
    <property type="match status" value="1"/>
</dbReference>
<dbReference type="PRINTS" id="PR00326">
    <property type="entry name" value="GTP1OBG"/>
</dbReference>
<dbReference type="SUPFAM" id="SSF82051">
    <property type="entry name" value="Obg GTP-binding protein N-terminal domain"/>
    <property type="match status" value="1"/>
</dbReference>
<dbReference type="SUPFAM" id="SSF52540">
    <property type="entry name" value="P-loop containing nucleoside triphosphate hydrolases"/>
    <property type="match status" value="1"/>
</dbReference>
<dbReference type="PROSITE" id="PS51710">
    <property type="entry name" value="G_OBG"/>
    <property type="match status" value="1"/>
</dbReference>
<dbReference type="PROSITE" id="PS51883">
    <property type="entry name" value="OBG"/>
    <property type="match status" value="1"/>
</dbReference>
<keyword id="KW-0963">Cytoplasm</keyword>
<keyword id="KW-0342">GTP-binding</keyword>
<keyword id="KW-0378">Hydrolase</keyword>
<keyword id="KW-0460">Magnesium</keyword>
<keyword id="KW-0479">Metal-binding</keyword>
<keyword id="KW-0547">Nucleotide-binding</keyword>
<evidence type="ECO:0000255" key="1">
    <source>
        <dbReference type="HAMAP-Rule" id="MF_01454"/>
    </source>
</evidence>
<evidence type="ECO:0000255" key="2">
    <source>
        <dbReference type="PROSITE-ProRule" id="PRU01231"/>
    </source>
</evidence>
<comment type="function">
    <text evidence="1">An essential GTPase which binds GTP, GDP and possibly (p)ppGpp with moderate affinity, with high nucleotide exchange rates and a fairly low GTP hydrolysis rate. Plays a role in control of the cell cycle, stress response, ribosome biogenesis and in those bacteria that undergo differentiation, in morphogenesis control.</text>
</comment>
<comment type="cofactor">
    <cofactor evidence="1">
        <name>Mg(2+)</name>
        <dbReference type="ChEBI" id="CHEBI:18420"/>
    </cofactor>
</comment>
<comment type="subunit">
    <text evidence="1">Monomer.</text>
</comment>
<comment type="subcellular location">
    <subcellularLocation>
        <location evidence="1">Cytoplasm</location>
    </subcellularLocation>
</comment>
<comment type="similarity">
    <text evidence="1">Belongs to the TRAFAC class OBG-HflX-like GTPase superfamily. OBG GTPase family.</text>
</comment>
<name>OBG_ORITI</name>
<reference key="1">
    <citation type="journal article" date="2008" name="DNA Res.">
        <title>The whole-genome sequencing of the obligate intracellular bacterium Orientia tsutsugamushi revealed massive gene amplification during reductive genome evolution.</title>
        <authorList>
            <person name="Nakayama K."/>
            <person name="Yamashita A."/>
            <person name="Kurokawa K."/>
            <person name="Morimoto T."/>
            <person name="Ogawa M."/>
            <person name="Fukuhara M."/>
            <person name="Urakami H."/>
            <person name="Ohnishi M."/>
            <person name="Uchiyama I."/>
            <person name="Ogura Y."/>
            <person name="Ooka T."/>
            <person name="Oshima K."/>
            <person name="Tamura A."/>
            <person name="Hattori M."/>
            <person name="Hayashi T."/>
        </authorList>
    </citation>
    <scope>NUCLEOTIDE SEQUENCE [LARGE SCALE GENOMIC DNA]</scope>
    <source>
        <strain>Ikeda</strain>
    </source>
</reference>
<protein>
    <recommendedName>
        <fullName evidence="1">GTPase Obg</fullName>
        <ecNumber evidence="1">3.6.5.-</ecNumber>
    </recommendedName>
    <alternativeName>
        <fullName evidence="1">GTP-binding protein Obg</fullName>
    </alternativeName>
</protein>